<organism>
    <name type="scientific">Pseudomonas aeruginosa (strain ATCC 15692 / DSM 22644 / CIP 104116 / JCM 14847 / LMG 12228 / 1C / PRS 101 / PAO1)</name>
    <dbReference type="NCBI Taxonomy" id="208964"/>
    <lineage>
        <taxon>Bacteria</taxon>
        <taxon>Pseudomonadati</taxon>
        <taxon>Pseudomonadota</taxon>
        <taxon>Gammaproteobacteria</taxon>
        <taxon>Pseudomonadales</taxon>
        <taxon>Pseudomonadaceae</taxon>
        <taxon>Pseudomonas</taxon>
    </lineage>
</organism>
<comment type="function">
    <text evidence="4">Essential for biofilm dispersion by sensing environmental cues. May be involved in sensing and transducing signals within cells, resulting in the modulation of c-di-GMP levels, swimming motility and adhesiveness of the bacterial cell surface.</text>
</comment>
<comment type="disruption phenotype">
    <text evidence="4">Cells are named mutant biofilms and do not disperse upon induction of the dispersion by succinate, silver nitrate, mercury chloride or sodium arsenate. They are resistant to hydrogen peroxide and more hydrophobic. They show higher intracellular levels of c-di-GMP (5- to 6-fold higher than in wild-type), increased adherent properties and impaired twitching motility. They display smaller, densely packed and symmetrical microcolonies.</text>
</comment>
<evidence type="ECO:0000255" key="1">
    <source>
        <dbReference type="PROSITE-ProRule" id="PRU00140"/>
    </source>
</evidence>
<evidence type="ECO:0000255" key="2">
    <source>
        <dbReference type="PROSITE-ProRule" id="PRU00141"/>
    </source>
</evidence>
<evidence type="ECO:0000255" key="3">
    <source>
        <dbReference type="PROSITE-ProRule" id="PRU00284"/>
    </source>
</evidence>
<evidence type="ECO:0000269" key="4">
    <source>
    </source>
</evidence>
<reference key="1">
    <citation type="journal article" date="2000" name="Nature">
        <title>Complete genome sequence of Pseudomonas aeruginosa PAO1, an opportunistic pathogen.</title>
        <authorList>
            <person name="Stover C.K."/>
            <person name="Pham X.-Q.T."/>
            <person name="Erwin A.L."/>
            <person name="Mizoguchi S.D."/>
            <person name="Warrener P."/>
            <person name="Hickey M.J."/>
            <person name="Brinkman F.S.L."/>
            <person name="Hufnagle W.O."/>
            <person name="Kowalik D.J."/>
            <person name="Lagrou M."/>
            <person name="Garber R.L."/>
            <person name="Goltry L."/>
            <person name="Tolentino E."/>
            <person name="Westbrock-Wadman S."/>
            <person name="Yuan Y."/>
            <person name="Brody L.L."/>
            <person name="Coulter S.N."/>
            <person name="Folger K.R."/>
            <person name="Kas A."/>
            <person name="Larbig K."/>
            <person name="Lim R.M."/>
            <person name="Smith K.A."/>
            <person name="Spencer D.H."/>
            <person name="Wong G.K.-S."/>
            <person name="Wu Z."/>
            <person name="Paulsen I.T."/>
            <person name="Reizer J."/>
            <person name="Saier M.H. Jr."/>
            <person name="Hancock R.E.W."/>
            <person name="Lory S."/>
            <person name="Olson M.V."/>
        </authorList>
    </citation>
    <scope>NUCLEOTIDE SEQUENCE [LARGE SCALE GENOMIC DNA]</scope>
    <source>
        <strain>ATCC 15692 / DSM 22644 / CIP 104116 / JCM 14847 / LMG 12228 / 1C / PRS 101 / PAO1</strain>
    </source>
</reference>
<reference key="2">
    <citation type="journal article" date="2006" name="J. Bacteriol.">
        <title>BdlA, a chemotaxis regulator essential for biofilm dispersion in Pseudomonas aeruginosa.</title>
        <authorList>
            <person name="Morgan R."/>
            <person name="Kohn S."/>
            <person name="Hwang S.-H."/>
            <person name="Hassett D.J."/>
            <person name="Sauer K."/>
        </authorList>
    </citation>
    <scope>FUNCTION IN BIOFILM DISPERSION</scope>
    <scope>DISRUPTION PHENOTYPE</scope>
    <source>
        <strain>ATCC 15692 / DSM 22644 / CIP 104116 / JCM 14847 / LMG 12228 / 1C / PRS 101 / PAO1</strain>
    </source>
</reference>
<keyword id="KW-1185">Reference proteome</keyword>
<keyword id="KW-0677">Repeat</keyword>
<keyword id="KW-0807">Transducer</keyword>
<dbReference type="EMBL" id="AE004091">
    <property type="protein sequence ID" value="AAG04812.1"/>
    <property type="molecule type" value="Genomic_DNA"/>
</dbReference>
<dbReference type="PIR" id="B83469">
    <property type="entry name" value="B83469"/>
</dbReference>
<dbReference type="RefSeq" id="NP_250114.1">
    <property type="nucleotide sequence ID" value="NC_002516.2"/>
</dbReference>
<dbReference type="RefSeq" id="WP_003082971.1">
    <property type="nucleotide sequence ID" value="NZ_QZGE01000005.1"/>
</dbReference>
<dbReference type="SMR" id="Q9I3S1"/>
<dbReference type="IntAct" id="Q9I3S1">
    <property type="interactions" value="2"/>
</dbReference>
<dbReference type="STRING" id="208964.PA1423"/>
<dbReference type="PaxDb" id="208964-PA1423"/>
<dbReference type="GeneID" id="881734"/>
<dbReference type="KEGG" id="pae:PA1423"/>
<dbReference type="PATRIC" id="fig|208964.12.peg.1472"/>
<dbReference type="PseudoCAP" id="PA1423"/>
<dbReference type="HOGENOM" id="CLU_000445_107_26_6"/>
<dbReference type="InParanoid" id="Q9I3S1"/>
<dbReference type="OrthoDB" id="9765776at2"/>
<dbReference type="PhylomeDB" id="Q9I3S1"/>
<dbReference type="BioCyc" id="PAER208964:G1FZ6-1449-MONOMER"/>
<dbReference type="PHI-base" id="PHI:3041"/>
<dbReference type="Proteomes" id="UP000002438">
    <property type="component" value="Chromosome"/>
</dbReference>
<dbReference type="GO" id="GO:0016020">
    <property type="term" value="C:membrane"/>
    <property type="evidence" value="ECO:0007669"/>
    <property type="project" value="InterPro"/>
</dbReference>
<dbReference type="GO" id="GO:0008276">
    <property type="term" value="F:protein methyltransferase activity"/>
    <property type="evidence" value="ECO:0000318"/>
    <property type="project" value="GO_Central"/>
</dbReference>
<dbReference type="GO" id="GO:0004888">
    <property type="term" value="F:transmembrane signaling receptor activity"/>
    <property type="evidence" value="ECO:0007669"/>
    <property type="project" value="InterPro"/>
</dbReference>
<dbReference type="GO" id="GO:0006935">
    <property type="term" value="P:chemotaxis"/>
    <property type="evidence" value="ECO:0007669"/>
    <property type="project" value="InterPro"/>
</dbReference>
<dbReference type="GO" id="GO:0007165">
    <property type="term" value="P:signal transduction"/>
    <property type="evidence" value="ECO:0007669"/>
    <property type="project" value="UniProtKB-KW"/>
</dbReference>
<dbReference type="CDD" id="cd11386">
    <property type="entry name" value="MCP_signal"/>
    <property type="match status" value="1"/>
</dbReference>
<dbReference type="CDD" id="cd00130">
    <property type="entry name" value="PAS"/>
    <property type="match status" value="2"/>
</dbReference>
<dbReference type="FunFam" id="3.30.450.20:FF:000103">
    <property type="entry name" value="Methyl-accepting chemotaxis protein"/>
    <property type="match status" value="2"/>
</dbReference>
<dbReference type="Gene3D" id="1.10.287.950">
    <property type="entry name" value="Methyl-accepting chemotaxis protein"/>
    <property type="match status" value="1"/>
</dbReference>
<dbReference type="Gene3D" id="3.30.450.20">
    <property type="entry name" value="PAS domain"/>
    <property type="match status" value="2"/>
</dbReference>
<dbReference type="InterPro" id="IPR050903">
    <property type="entry name" value="Bact_Chemotaxis_MeTrfase"/>
</dbReference>
<dbReference type="InterPro" id="IPR004090">
    <property type="entry name" value="Chemotax_Me-accpt_rcpt"/>
</dbReference>
<dbReference type="InterPro" id="IPR004089">
    <property type="entry name" value="MCPsignal_dom"/>
</dbReference>
<dbReference type="InterPro" id="IPR001610">
    <property type="entry name" value="PAC"/>
</dbReference>
<dbReference type="InterPro" id="IPR000014">
    <property type="entry name" value="PAS"/>
</dbReference>
<dbReference type="InterPro" id="IPR000700">
    <property type="entry name" value="PAS-assoc_C"/>
</dbReference>
<dbReference type="InterPro" id="IPR035965">
    <property type="entry name" value="PAS-like_dom_sf"/>
</dbReference>
<dbReference type="InterPro" id="IPR013655">
    <property type="entry name" value="PAS_fold_3"/>
</dbReference>
<dbReference type="NCBIfam" id="TIGR00229">
    <property type="entry name" value="sensory_box"/>
    <property type="match status" value="2"/>
</dbReference>
<dbReference type="PANTHER" id="PTHR24422">
    <property type="entry name" value="CHEMOTAXIS PROTEIN METHYLTRANSFERASE"/>
    <property type="match status" value="1"/>
</dbReference>
<dbReference type="PANTHER" id="PTHR24422:SF10">
    <property type="entry name" value="CHEMOTAXIS PROTEIN METHYLTRANSFERASE 2"/>
    <property type="match status" value="1"/>
</dbReference>
<dbReference type="Pfam" id="PF00015">
    <property type="entry name" value="MCPsignal"/>
    <property type="match status" value="1"/>
</dbReference>
<dbReference type="Pfam" id="PF08447">
    <property type="entry name" value="PAS_3"/>
    <property type="match status" value="1"/>
</dbReference>
<dbReference type="Pfam" id="PF13426">
    <property type="entry name" value="PAS_9"/>
    <property type="match status" value="1"/>
</dbReference>
<dbReference type="PRINTS" id="PR00260">
    <property type="entry name" value="CHEMTRNSDUCR"/>
</dbReference>
<dbReference type="SMART" id="SM00283">
    <property type="entry name" value="MA"/>
    <property type="match status" value="1"/>
</dbReference>
<dbReference type="SMART" id="SM00086">
    <property type="entry name" value="PAC"/>
    <property type="match status" value="2"/>
</dbReference>
<dbReference type="SMART" id="SM00091">
    <property type="entry name" value="PAS"/>
    <property type="match status" value="2"/>
</dbReference>
<dbReference type="SUPFAM" id="SSF58104">
    <property type="entry name" value="Methyl-accepting chemotaxis protein (MCP) signaling domain"/>
    <property type="match status" value="1"/>
</dbReference>
<dbReference type="SUPFAM" id="SSF55785">
    <property type="entry name" value="PYP-like sensor domain (PAS domain)"/>
    <property type="match status" value="2"/>
</dbReference>
<dbReference type="PROSITE" id="PS50111">
    <property type="entry name" value="CHEMOTAXIS_TRANSDUC_2"/>
    <property type="match status" value="1"/>
</dbReference>
<dbReference type="PROSITE" id="PS50113">
    <property type="entry name" value="PAC"/>
    <property type="match status" value="2"/>
</dbReference>
<dbReference type="PROSITE" id="PS50112">
    <property type="entry name" value="PAS"/>
    <property type="match status" value="1"/>
</dbReference>
<name>BDLA_PSEAE</name>
<gene>
    <name type="primary">bdlA</name>
    <name type="ordered locus">PA1423</name>
</gene>
<sequence length="417" mass="46923">MAALDRSMARVEFDPDGNITDANENFLTLLGYRRDEILGKPHRQLCDGAYAQSEDYRRFWERLRRGEHFSGRCKRITREGRPLWLEATYNPVRDGQGRLLKVVKYASDIDAIVHQEHEMQSKLDALSRSMAMIEFDLDGNVLAANDNFLATMGYGRAELASANHRQFCEPGYRDGPQYADLWRRLNRGEYVTGQFRRVHRNGQPVWLEASYNPVYDADGKLYKVVKFASDVSDRMRRYQAEADNAHQAHTLSTETRTVAEHGALIIQSAVEEMLKIANTLDASSLNIGELSQHSQQITSIVNTIREIAEQTNLLALNAAIEAARAGDQGRGFAVVADEVRQLAERTSKSTKEIADMIGRIQTGTRSVIDDMQHSQEQARRGVELANEAGAAILGIRESTHKVVEAVQQFSRTLNADL</sequence>
<feature type="chain" id="PRO_0000262581" description="Biofilm dispersion protein BdlA">
    <location>
        <begin position="1"/>
        <end position="417"/>
    </location>
</feature>
<feature type="domain" description="PAS 1" evidence="1">
    <location>
        <begin position="1"/>
        <end position="66"/>
    </location>
</feature>
<feature type="domain" description="PAC 1" evidence="2">
    <location>
        <begin position="67"/>
        <end position="114"/>
    </location>
</feature>
<feature type="domain" description="PAS 2" evidence="1">
    <location>
        <begin position="115"/>
        <end position="188"/>
    </location>
</feature>
<feature type="domain" description="PAC 2" evidence="2">
    <location>
        <begin position="191"/>
        <end position="241"/>
    </location>
</feature>
<feature type="domain" description="Methyl-accepting transducer" evidence="3">
    <location>
        <begin position="242"/>
        <end position="417"/>
    </location>
</feature>
<protein>
    <recommendedName>
        <fullName>Biofilm dispersion protein BdlA</fullName>
    </recommendedName>
    <alternativeName>
        <fullName>Chemotaxis regulator BdlA</fullName>
    </alternativeName>
</protein>
<accession>Q9I3S1</accession>
<proteinExistence type="evidence at protein level"/>